<comment type="function">
    <text evidence="1">Produces ATP from ADP in the presence of a proton gradient across the membrane. The alpha chain is a regulatory subunit.</text>
</comment>
<comment type="catalytic activity">
    <reaction evidence="1">
        <text>ATP + H2O + 4 H(+)(in) = ADP + phosphate + 5 H(+)(out)</text>
        <dbReference type="Rhea" id="RHEA:57720"/>
        <dbReference type="ChEBI" id="CHEBI:15377"/>
        <dbReference type="ChEBI" id="CHEBI:15378"/>
        <dbReference type="ChEBI" id="CHEBI:30616"/>
        <dbReference type="ChEBI" id="CHEBI:43474"/>
        <dbReference type="ChEBI" id="CHEBI:456216"/>
        <dbReference type="EC" id="7.1.2.2"/>
    </reaction>
</comment>
<comment type="subunit">
    <text evidence="1">F-type ATPases have 2 components, CF(1) - the catalytic core - and CF(0) - the membrane proton channel. CF(1) has five subunits: alpha(3), beta(3), gamma(1), delta(1), epsilon(1). CF(0) has three main subunits: a(1), b(2) and c(9-12). The alpha and beta chains form an alternating ring which encloses part of the gamma chain. CF(1) is attached to CF(0) by a central stalk formed by the gamma and epsilon chains, while a peripheral stalk is formed by the delta and b chains.</text>
</comment>
<comment type="subcellular location">
    <subcellularLocation>
        <location evidence="1">Cell membrane</location>
        <topology evidence="1">Peripheral membrane protein</topology>
    </subcellularLocation>
</comment>
<comment type="similarity">
    <text evidence="1">Belongs to the ATPase alpha/beta chains family.</text>
</comment>
<name>ATPA_CLOBJ</name>
<gene>
    <name evidence="1" type="primary">atpA</name>
    <name type="ordered locus">CLM_0198</name>
</gene>
<reference key="1">
    <citation type="submission" date="2008-10" db="EMBL/GenBank/DDBJ databases">
        <title>Genome sequence of Clostridium botulinum A2 Kyoto.</title>
        <authorList>
            <person name="Shrivastava S."/>
            <person name="Brinkac L.M."/>
            <person name="Brown J.L."/>
            <person name="Bruce D."/>
            <person name="Detter C.C."/>
            <person name="Johnson E.A."/>
            <person name="Munk C.A."/>
            <person name="Smith L.A."/>
            <person name="Smith T.J."/>
            <person name="Sutton G."/>
            <person name="Brettin T.S."/>
        </authorList>
    </citation>
    <scope>NUCLEOTIDE SEQUENCE [LARGE SCALE GENOMIC DNA]</scope>
    <source>
        <strain>Kyoto / Type A2</strain>
    </source>
</reference>
<organism>
    <name type="scientific">Clostridium botulinum (strain Kyoto / Type A2)</name>
    <dbReference type="NCBI Taxonomy" id="536232"/>
    <lineage>
        <taxon>Bacteria</taxon>
        <taxon>Bacillati</taxon>
        <taxon>Bacillota</taxon>
        <taxon>Clostridia</taxon>
        <taxon>Eubacteriales</taxon>
        <taxon>Clostridiaceae</taxon>
        <taxon>Clostridium</taxon>
    </lineage>
</organism>
<keyword id="KW-0066">ATP synthesis</keyword>
<keyword id="KW-0067">ATP-binding</keyword>
<keyword id="KW-1003">Cell membrane</keyword>
<keyword id="KW-0139">CF(1)</keyword>
<keyword id="KW-0375">Hydrogen ion transport</keyword>
<keyword id="KW-0406">Ion transport</keyword>
<keyword id="KW-0472">Membrane</keyword>
<keyword id="KW-0547">Nucleotide-binding</keyword>
<keyword id="KW-1278">Translocase</keyword>
<keyword id="KW-0813">Transport</keyword>
<protein>
    <recommendedName>
        <fullName evidence="1">ATP synthase subunit alpha</fullName>
        <ecNumber evidence="1">7.1.2.2</ecNumber>
    </recommendedName>
    <alternativeName>
        <fullName evidence="1">ATP synthase F1 sector subunit alpha</fullName>
    </alternativeName>
    <alternativeName>
        <fullName evidence="1">F-ATPase subunit alpha</fullName>
    </alternativeName>
</protein>
<feature type="chain" id="PRO_1000166530" description="ATP synthase subunit alpha">
    <location>
        <begin position="1"/>
        <end position="504"/>
    </location>
</feature>
<feature type="binding site" evidence="1">
    <location>
        <begin position="169"/>
        <end position="176"/>
    </location>
    <ligand>
        <name>ATP</name>
        <dbReference type="ChEBI" id="CHEBI:30616"/>
    </ligand>
</feature>
<feature type="site" description="Required for activity" evidence="1">
    <location>
        <position position="362"/>
    </location>
</feature>
<dbReference type="EC" id="7.1.2.2" evidence="1"/>
<dbReference type="EMBL" id="CP001581">
    <property type="protein sequence ID" value="ACO85385.1"/>
    <property type="molecule type" value="Genomic_DNA"/>
</dbReference>
<dbReference type="RefSeq" id="WP_003356056.1">
    <property type="nucleotide sequence ID" value="NC_012563.1"/>
</dbReference>
<dbReference type="SMR" id="C1FQP3"/>
<dbReference type="GeneID" id="5184409"/>
<dbReference type="KEGG" id="cby:CLM_0198"/>
<dbReference type="eggNOG" id="COG0056">
    <property type="taxonomic scope" value="Bacteria"/>
</dbReference>
<dbReference type="HOGENOM" id="CLU_010091_2_1_9"/>
<dbReference type="Proteomes" id="UP000001374">
    <property type="component" value="Chromosome"/>
</dbReference>
<dbReference type="GO" id="GO:0005886">
    <property type="term" value="C:plasma membrane"/>
    <property type="evidence" value="ECO:0007669"/>
    <property type="project" value="UniProtKB-SubCell"/>
</dbReference>
<dbReference type="GO" id="GO:0045259">
    <property type="term" value="C:proton-transporting ATP synthase complex"/>
    <property type="evidence" value="ECO:0007669"/>
    <property type="project" value="UniProtKB-KW"/>
</dbReference>
<dbReference type="GO" id="GO:0043531">
    <property type="term" value="F:ADP binding"/>
    <property type="evidence" value="ECO:0007669"/>
    <property type="project" value="TreeGrafter"/>
</dbReference>
<dbReference type="GO" id="GO:0005524">
    <property type="term" value="F:ATP binding"/>
    <property type="evidence" value="ECO:0007669"/>
    <property type="project" value="UniProtKB-UniRule"/>
</dbReference>
<dbReference type="GO" id="GO:0046933">
    <property type="term" value="F:proton-transporting ATP synthase activity, rotational mechanism"/>
    <property type="evidence" value="ECO:0007669"/>
    <property type="project" value="UniProtKB-UniRule"/>
</dbReference>
<dbReference type="CDD" id="cd18113">
    <property type="entry name" value="ATP-synt_F1_alpha_C"/>
    <property type="match status" value="1"/>
</dbReference>
<dbReference type="CDD" id="cd18116">
    <property type="entry name" value="ATP-synt_F1_alpha_N"/>
    <property type="match status" value="1"/>
</dbReference>
<dbReference type="CDD" id="cd01132">
    <property type="entry name" value="F1-ATPase_alpha_CD"/>
    <property type="match status" value="1"/>
</dbReference>
<dbReference type="FunFam" id="1.20.150.20:FF:000001">
    <property type="entry name" value="ATP synthase subunit alpha"/>
    <property type="match status" value="1"/>
</dbReference>
<dbReference type="FunFam" id="2.40.30.20:FF:000001">
    <property type="entry name" value="ATP synthase subunit alpha"/>
    <property type="match status" value="1"/>
</dbReference>
<dbReference type="FunFam" id="3.40.50.300:FF:000002">
    <property type="entry name" value="ATP synthase subunit alpha"/>
    <property type="match status" value="1"/>
</dbReference>
<dbReference type="Gene3D" id="2.40.30.20">
    <property type="match status" value="1"/>
</dbReference>
<dbReference type="Gene3D" id="1.20.150.20">
    <property type="entry name" value="ATP synthase alpha/beta chain, C-terminal domain"/>
    <property type="match status" value="1"/>
</dbReference>
<dbReference type="Gene3D" id="3.40.50.300">
    <property type="entry name" value="P-loop containing nucleotide triphosphate hydrolases"/>
    <property type="match status" value="1"/>
</dbReference>
<dbReference type="HAMAP" id="MF_01346">
    <property type="entry name" value="ATP_synth_alpha_bact"/>
    <property type="match status" value="1"/>
</dbReference>
<dbReference type="InterPro" id="IPR023366">
    <property type="entry name" value="ATP_synth_asu-like_sf"/>
</dbReference>
<dbReference type="InterPro" id="IPR000793">
    <property type="entry name" value="ATP_synth_asu_C"/>
</dbReference>
<dbReference type="InterPro" id="IPR038376">
    <property type="entry name" value="ATP_synth_asu_C_sf"/>
</dbReference>
<dbReference type="InterPro" id="IPR033732">
    <property type="entry name" value="ATP_synth_F1_a_nt-bd_dom"/>
</dbReference>
<dbReference type="InterPro" id="IPR005294">
    <property type="entry name" value="ATP_synth_F1_asu"/>
</dbReference>
<dbReference type="InterPro" id="IPR020003">
    <property type="entry name" value="ATPase_a/bsu_AS"/>
</dbReference>
<dbReference type="InterPro" id="IPR004100">
    <property type="entry name" value="ATPase_F1/V1/A1_a/bsu_N"/>
</dbReference>
<dbReference type="InterPro" id="IPR036121">
    <property type="entry name" value="ATPase_F1/V1/A1_a/bsu_N_sf"/>
</dbReference>
<dbReference type="InterPro" id="IPR000194">
    <property type="entry name" value="ATPase_F1/V1/A1_a/bsu_nucl-bd"/>
</dbReference>
<dbReference type="InterPro" id="IPR027417">
    <property type="entry name" value="P-loop_NTPase"/>
</dbReference>
<dbReference type="NCBIfam" id="TIGR00962">
    <property type="entry name" value="atpA"/>
    <property type="match status" value="1"/>
</dbReference>
<dbReference type="NCBIfam" id="NF009884">
    <property type="entry name" value="PRK13343.1"/>
    <property type="match status" value="1"/>
</dbReference>
<dbReference type="PANTHER" id="PTHR48082">
    <property type="entry name" value="ATP SYNTHASE SUBUNIT ALPHA, MITOCHONDRIAL"/>
    <property type="match status" value="1"/>
</dbReference>
<dbReference type="PANTHER" id="PTHR48082:SF2">
    <property type="entry name" value="ATP SYNTHASE SUBUNIT ALPHA, MITOCHONDRIAL"/>
    <property type="match status" value="1"/>
</dbReference>
<dbReference type="Pfam" id="PF00006">
    <property type="entry name" value="ATP-synt_ab"/>
    <property type="match status" value="1"/>
</dbReference>
<dbReference type="Pfam" id="PF00306">
    <property type="entry name" value="ATP-synt_ab_C"/>
    <property type="match status" value="1"/>
</dbReference>
<dbReference type="Pfam" id="PF02874">
    <property type="entry name" value="ATP-synt_ab_N"/>
    <property type="match status" value="1"/>
</dbReference>
<dbReference type="PIRSF" id="PIRSF039088">
    <property type="entry name" value="F_ATPase_subunit_alpha"/>
    <property type="match status" value="1"/>
</dbReference>
<dbReference type="SUPFAM" id="SSF47917">
    <property type="entry name" value="C-terminal domain of alpha and beta subunits of F1 ATP synthase"/>
    <property type="match status" value="1"/>
</dbReference>
<dbReference type="SUPFAM" id="SSF50615">
    <property type="entry name" value="N-terminal domain of alpha and beta subunits of F1 ATP synthase"/>
    <property type="match status" value="1"/>
</dbReference>
<dbReference type="SUPFAM" id="SSF52540">
    <property type="entry name" value="P-loop containing nucleoside triphosphate hydrolases"/>
    <property type="match status" value="1"/>
</dbReference>
<dbReference type="PROSITE" id="PS00152">
    <property type="entry name" value="ATPASE_ALPHA_BETA"/>
    <property type="match status" value="1"/>
</dbReference>
<proteinExistence type="inferred from homology"/>
<evidence type="ECO:0000255" key="1">
    <source>
        <dbReference type="HAMAP-Rule" id="MF_01346"/>
    </source>
</evidence>
<sequence>MNIKPEEITSIIRQQIENFNTNIETIDSGTIIQIGDGIARVYGLEDCMEGELIEFPNDVYGMALNLEQDNVGCVLLGSEEGIKEGNVVKRTKKVVEVPVGEALVGRVVNSLGMPIDGKGPVLTTETRDVEVPAPGVIDRQSVKEPLQTGIKAIDSMIPIGKGQRELIIGDRQTGKTAIAMDTILNQKGKDVICIYVAIGQKQSTVAHIVNDLTKMGAMDYTIVVSSTASDSAPLQYLAPYAGCSMGEYFMHKGKDVLIVYDDLSKHAVAYRTMSLLLRRPPGREAYPGDVFYLHSRLLERSARLSEKLGGGSLTALPIVETLAGDVTAYIPTNVISITDGQIFLESELFNAGQRPAVNAGISVSRVGGNAQIKAMKQVAGTLRLELAQYRELAAFSQFGSDLDKESVKRLEKGKRLVEILKQPQYSPMPVEKEIIILYAAVSNHLIDIPVNKIKEFEKELFNYIDTHYRDIGKDILEHKQLTDELKSKLDKAINDFKNVFLSEI</sequence>
<accession>C1FQP3</accession>